<feature type="chain" id="PRO_0000451720" description="Valerianol synthase TPS1B">
    <location>
        <begin position="1"/>
        <end position="554"/>
    </location>
</feature>
<feature type="short sequence motif" description="DDXXD motif" evidence="4">
    <location>
        <begin position="326"/>
        <end position="330"/>
    </location>
</feature>
<feature type="binding site" evidence="1">
    <location>
        <position position="307"/>
    </location>
    <ligand>
        <name>Mg(2+)</name>
        <dbReference type="ChEBI" id="CHEBI:18420"/>
        <label>1</label>
    </ligand>
</feature>
<feature type="binding site" evidence="1">
    <location>
        <position position="307"/>
    </location>
    <ligand>
        <name>Mg(2+)</name>
        <dbReference type="ChEBI" id="CHEBI:18420"/>
        <label>2</label>
    </ligand>
</feature>
<feature type="binding site" evidence="1">
    <location>
        <position position="311"/>
    </location>
    <ligand>
        <name>Mg(2+)</name>
        <dbReference type="ChEBI" id="CHEBI:18420"/>
        <label>1</label>
    </ligand>
</feature>
<feature type="binding site" evidence="1">
    <location>
        <position position="311"/>
    </location>
    <ligand>
        <name>Mg(2+)</name>
        <dbReference type="ChEBI" id="CHEBI:18420"/>
        <label>2</label>
    </ligand>
</feature>
<feature type="binding site" evidence="1">
    <location>
        <position position="452"/>
    </location>
    <ligand>
        <name>Mg(2+)</name>
        <dbReference type="ChEBI" id="CHEBI:18420"/>
        <label>3</label>
    </ligand>
</feature>
<feature type="binding site" evidence="1">
    <location>
        <position position="456"/>
    </location>
    <ligand>
        <name>Mg(2+)</name>
        <dbReference type="ChEBI" id="CHEBI:18420"/>
        <label>3</label>
    </ligand>
</feature>
<feature type="binding site" evidence="1">
    <location>
        <position position="460"/>
    </location>
    <ligand>
        <name>Mg(2+)</name>
        <dbReference type="ChEBI" id="CHEBI:18420"/>
        <label>3</label>
    </ligand>
</feature>
<evidence type="ECO:0000250" key="1">
    <source>
        <dbReference type="UniProtKB" id="Q40577"/>
    </source>
</evidence>
<evidence type="ECO:0000269" key="2">
    <source>
    </source>
</evidence>
<evidence type="ECO:0000303" key="3">
    <source>
    </source>
</evidence>
<evidence type="ECO:0000305" key="4"/>
<sequence>MASSQVGDMVNGNAEPTRHLAKFPPSLWGDRFTSFTLDKQLWDKYGNEIEVLKEQVRSMVVAGGRKAAEQINLINVLQRLGVSYHFEKEIEEQLEQLFAKFEDNEDYDLFTIALHFRIFRQHGYKMSCDVFNKFRDSNGEFKETMSNDVQGMLSLYEATYLKIRGEGFLDEAHAFTIAQLESLVEGPHLSSDLSEQVMHALKQSIHRGFPRLEAKHFISFYEKDASRNETLLRLAKLDFNQLQLSHREELCHIFRWWKELDLISKVPYARDRAVECFFWSTCAYYEPQHSVGRAVLTKIMLLLSVTDDTYDAYGTYNELKIYTNAVQRWDVSAMDELPDYMKALYRALLNVYDEVERDLAKQGRAYGVHHSKEAFKEIVRSYEIEAEWFKEGYVASFEEYMKNALVTSTGRLHTTSCFMGLEADVATTEAFEWILTKPKMVAASGAIGRLVDDVMSHDEEQERGHVATGLDCYMKQHGVSKQEAIVELYKMIENAWRDINEEMLKPTAISMKLLIRVLNLSRISDVVYKYVDGYTHPEIIKDHVISLFEDPIPM</sequence>
<organism>
    <name type="scientific">Camellia hiemalis</name>
    <name type="common">Camellia</name>
    <dbReference type="NCBI Taxonomy" id="1840584"/>
    <lineage>
        <taxon>Eukaryota</taxon>
        <taxon>Viridiplantae</taxon>
        <taxon>Streptophyta</taxon>
        <taxon>Embryophyta</taxon>
        <taxon>Tracheophyta</taxon>
        <taxon>Spermatophyta</taxon>
        <taxon>Magnoliopsida</taxon>
        <taxon>eudicotyledons</taxon>
        <taxon>Gunneridae</taxon>
        <taxon>Pentapetalae</taxon>
        <taxon>asterids</taxon>
        <taxon>Ericales</taxon>
        <taxon>Theaceae</taxon>
        <taxon>Camellia</taxon>
    </lineage>
</organism>
<gene>
    <name evidence="3" type="primary">TPS1B</name>
</gene>
<accession>A0A348AUV6</accession>
<proteinExistence type="evidence at transcript level"/>
<comment type="function">
    <text evidence="2">Terpene synthase that catalyzes the biosynthesis of the terpene valerianol, which is a volatile compound of floral scent.</text>
</comment>
<comment type="catalytic activity">
    <reaction evidence="2">
        <text>(2E,6E)-farnesyl diphosphate + H2O = valerianol + diphosphate</text>
        <dbReference type="Rhea" id="RHEA:60424"/>
        <dbReference type="ChEBI" id="CHEBI:15377"/>
        <dbReference type="ChEBI" id="CHEBI:33019"/>
        <dbReference type="ChEBI" id="CHEBI:143779"/>
        <dbReference type="ChEBI" id="CHEBI:175763"/>
        <dbReference type="EC" id="4.2.3.204"/>
    </reaction>
    <physiologicalReaction direction="left-to-right" evidence="2">
        <dbReference type="Rhea" id="RHEA:60425"/>
    </physiologicalReaction>
</comment>
<comment type="cofactor">
    <cofactor evidence="1">
        <name>Mg(2+)</name>
        <dbReference type="ChEBI" id="CHEBI:18420"/>
    </cofactor>
    <text evidence="1">Binds 3 Mg(2+) ions per subunit.</text>
</comment>
<comment type="pathway">
    <text evidence="4">Secondary metabolite biosynthesis; terpenoid biosynthesis.</text>
</comment>
<comment type="domain">
    <text evidence="4">The Asp-Asp-Xaa-Xaa-Asp/Glu (DDXXD/E) motif is important for the catalytic activity, presumably through binding to Mg(2+).</text>
</comment>
<comment type="similarity">
    <text evidence="4">Belongs to the terpene synthase family.</text>
</comment>
<name>TPS1B_CAMHI</name>
<keyword id="KW-0456">Lyase</keyword>
<keyword id="KW-0460">Magnesium</keyword>
<keyword id="KW-0479">Metal-binding</keyword>
<reference key="1">
    <citation type="journal article" date="2018" name="Sci. Rep.">
        <title>Identification of novel sesquiterpene synthase genes that mediate the biosynthesis of valerianol, which was an unknown ingredient of tea.</title>
        <authorList>
            <person name="Hattan J."/>
            <person name="Shindo K."/>
            <person name="Sasaki T."/>
            <person name="Ohno F."/>
            <person name="Tokuda H."/>
            <person name="Ishikawa K."/>
            <person name="Misawa N."/>
        </authorList>
    </citation>
    <scope>NUCLEOTIDE SEQUENCE [MRNA]</scope>
</reference>
<dbReference type="EC" id="4.2.3.204" evidence="2"/>
<dbReference type="EMBL" id="LC212977">
    <property type="protein sequence ID" value="BBC44637.1"/>
    <property type="molecule type" value="mRNA"/>
</dbReference>
<dbReference type="SMR" id="A0A348AUV6"/>
<dbReference type="UniPathway" id="UPA00213"/>
<dbReference type="GO" id="GO:0016838">
    <property type="term" value="F:carbon-oxygen lyase activity, acting on phosphates"/>
    <property type="evidence" value="ECO:0000314"/>
    <property type="project" value="UniProtKB"/>
</dbReference>
<dbReference type="GO" id="GO:0000287">
    <property type="term" value="F:magnesium ion binding"/>
    <property type="evidence" value="ECO:0007669"/>
    <property type="project" value="InterPro"/>
</dbReference>
<dbReference type="GO" id="GO:0010333">
    <property type="term" value="F:terpene synthase activity"/>
    <property type="evidence" value="ECO:0007669"/>
    <property type="project" value="InterPro"/>
</dbReference>
<dbReference type="GO" id="GO:0016102">
    <property type="term" value="P:diterpenoid biosynthetic process"/>
    <property type="evidence" value="ECO:0007669"/>
    <property type="project" value="InterPro"/>
</dbReference>
<dbReference type="GO" id="GO:0016106">
    <property type="term" value="P:sesquiterpenoid biosynthetic process"/>
    <property type="evidence" value="ECO:0000314"/>
    <property type="project" value="UniProtKB"/>
</dbReference>
<dbReference type="CDD" id="cd00684">
    <property type="entry name" value="Terpene_cyclase_plant_C1"/>
    <property type="match status" value="1"/>
</dbReference>
<dbReference type="FunFam" id="1.10.600.10:FF:000007">
    <property type="entry name" value="Isoprene synthase, chloroplastic"/>
    <property type="match status" value="1"/>
</dbReference>
<dbReference type="FunFam" id="1.50.10.130:FF:000001">
    <property type="entry name" value="Isoprene synthase, chloroplastic"/>
    <property type="match status" value="1"/>
</dbReference>
<dbReference type="Gene3D" id="1.10.600.10">
    <property type="entry name" value="Farnesyl Diphosphate Synthase"/>
    <property type="match status" value="1"/>
</dbReference>
<dbReference type="Gene3D" id="1.50.10.130">
    <property type="entry name" value="Terpene synthase, N-terminal domain"/>
    <property type="match status" value="1"/>
</dbReference>
<dbReference type="InterPro" id="IPR008949">
    <property type="entry name" value="Isoprenoid_synthase_dom_sf"/>
</dbReference>
<dbReference type="InterPro" id="IPR034741">
    <property type="entry name" value="Terpene_cyclase-like_1_C"/>
</dbReference>
<dbReference type="InterPro" id="IPR044814">
    <property type="entry name" value="Terpene_cyclase_plant_C1"/>
</dbReference>
<dbReference type="InterPro" id="IPR001906">
    <property type="entry name" value="Terpene_synth_N"/>
</dbReference>
<dbReference type="InterPro" id="IPR036965">
    <property type="entry name" value="Terpene_synth_N_sf"/>
</dbReference>
<dbReference type="InterPro" id="IPR050148">
    <property type="entry name" value="Terpene_synthase-like"/>
</dbReference>
<dbReference type="InterPro" id="IPR005630">
    <property type="entry name" value="Terpene_synthase_metal-bd"/>
</dbReference>
<dbReference type="InterPro" id="IPR008930">
    <property type="entry name" value="Terpenoid_cyclase/PrenylTrfase"/>
</dbReference>
<dbReference type="PANTHER" id="PTHR31225:SF93">
    <property type="entry name" value="ALPHA-HUMULENE_(-)-(E)-BETA-CARYOPHYLLENE SYNTHASE"/>
    <property type="match status" value="1"/>
</dbReference>
<dbReference type="PANTHER" id="PTHR31225">
    <property type="entry name" value="OS04G0344100 PROTEIN-RELATED"/>
    <property type="match status" value="1"/>
</dbReference>
<dbReference type="Pfam" id="PF01397">
    <property type="entry name" value="Terpene_synth"/>
    <property type="match status" value="1"/>
</dbReference>
<dbReference type="Pfam" id="PF03936">
    <property type="entry name" value="Terpene_synth_C"/>
    <property type="match status" value="1"/>
</dbReference>
<dbReference type="SFLD" id="SFLDS00005">
    <property type="entry name" value="Isoprenoid_Synthase_Type_I"/>
    <property type="match status" value="1"/>
</dbReference>
<dbReference type="SFLD" id="SFLDG01019">
    <property type="entry name" value="Terpene_Cyclase_Like_1_C_Termi"/>
    <property type="match status" value="1"/>
</dbReference>
<dbReference type="SUPFAM" id="SSF48239">
    <property type="entry name" value="Terpenoid cyclases/Protein prenyltransferases"/>
    <property type="match status" value="1"/>
</dbReference>
<dbReference type="SUPFAM" id="SSF48576">
    <property type="entry name" value="Terpenoid synthases"/>
    <property type="match status" value="1"/>
</dbReference>
<protein>
    <recommendedName>
        <fullName evidence="4">Valerianol synthase TPS1B</fullName>
        <ecNumber evidence="2">4.2.3.204</ecNumber>
    </recommendedName>
    <alternativeName>
        <fullName evidence="3">Terpene synthase 1b</fullName>
        <shortName evidence="3">ChTps1b</shortName>
    </alternativeName>
</protein>